<keyword id="KW-0150">Chloroplast</keyword>
<keyword id="KW-0934">Plastid</keyword>
<keyword id="KW-0687">Ribonucleoprotein</keyword>
<keyword id="KW-0689">Ribosomal protein</keyword>
<evidence type="ECO:0000255" key="1">
    <source>
        <dbReference type="HAMAP-Rule" id="MF_00385"/>
    </source>
</evidence>
<evidence type="ECO:0000305" key="2"/>
<proteinExistence type="inferred from homology"/>
<dbReference type="EMBL" id="AJ428413">
    <property type="protein sequence ID" value="CAD28703.1"/>
    <property type="molecule type" value="Genomic_DNA"/>
</dbReference>
<dbReference type="RefSeq" id="NP_862736.1">
    <property type="nucleotide sequence ID" value="NC_004993.1"/>
</dbReference>
<dbReference type="SMR" id="Q7YJY6"/>
<dbReference type="GeneID" id="2598040"/>
<dbReference type="GO" id="GO:0009507">
    <property type="term" value="C:chloroplast"/>
    <property type="evidence" value="ECO:0007669"/>
    <property type="project" value="UniProtKB-SubCell"/>
</dbReference>
<dbReference type="GO" id="GO:0005739">
    <property type="term" value="C:mitochondrion"/>
    <property type="evidence" value="ECO:0007669"/>
    <property type="project" value="GOC"/>
</dbReference>
<dbReference type="GO" id="GO:0015935">
    <property type="term" value="C:small ribosomal subunit"/>
    <property type="evidence" value="ECO:0007669"/>
    <property type="project" value="TreeGrafter"/>
</dbReference>
<dbReference type="GO" id="GO:0003735">
    <property type="term" value="F:structural constituent of ribosome"/>
    <property type="evidence" value="ECO:0007669"/>
    <property type="project" value="InterPro"/>
</dbReference>
<dbReference type="GO" id="GO:0032543">
    <property type="term" value="P:mitochondrial translation"/>
    <property type="evidence" value="ECO:0007669"/>
    <property type="project" value="TreeGrafter"/>
</dbReference>
<dbReference type="FunFam" id="3.30.1320.10:FF:000003">
    <property type="entry name" value="30S ribosomal protein S16, chloroplastic"/>
    <property type="match status" value="1"/>
</dbReference>
<dbReference type="Gene3D" id="3.30.1320.10">
    <property type="match status" value="1"/>
</dbReference>
<dbReference type="HAMAP" id="MF_00385">
    <property type="entry name" value="Ribosomal_bS16"/>
    <property type="match status" value="1"/>
</dbReference>
<dbReference type="InterPro" id="IPR000307">
    <property type="entry name" value="Ribosomal_bS16"/>
</dbReference>
<dbReference type="InterPro" id="IPR020592">
    <property type="entry name" value="Ribosomal_bS16_CS"/>
</dbReference>
<dbReference type="InterPro" id="IPR023803">
    <property type="entry name" value="Ribosomal_bS16_dom_sf"/>
</dbReference>
<dbReference type="NCBIfam" id="TIGR00002">
    <property type="entry name" value="S16"/>
    <property type="match status" value="1"/>
</dbReference>
<dbReference type="PANTHER" id="PTHR12919">
    <property type="entry name" value="30S RIBOSOMAL PROTEIN S16"/>
    <property type="match status" value="1"/>
</dbReference>
<dbReference type="PANTHER" id="PTHR12919:SF20">
    <property type="entry name" value="SMALL RIBOSOMAL SUBUNIT PROTEIN BS16M"/>
    <property type="match status" value="1"/>
</dbReference>
<dbReference type="Pfam" id="PF00886">
    <property type="entry name" value="Ribosomal_S16"/>
    <property type="match status" value="1"/>
</dbReference>
<dbReference type="SUPFAM" id="SSF54565">
    <property type="entry name" value="Ribosomal protein S16"/>
    <property type="match status" value="1"/>
</dbReference>
<dbReference type="PROSITE" id="PS00732">
    <property type="entry name" value="RIBOSOMAL_S16"/>
    <property type="match status" value="1"/>
</dbReference>
<protein>
    <recommendedName>
        <fullName evidence="1">Small ribosomal subunit protein bS16c</fullName>
    </recommendedName>
    <alternativeName>
        <fullName evidence="2">30S ribosomal protein S16, chloroplastic</fullName>
    </alternativeName>
</protein>
<organism>
    <name type="scientific">Calycanthus floridus var. glaucus</name>
    <name type="common">Eastern sweetshrub</name>
    <name type="synonym">Calycanthus fertilis var. ferax</name>
    <dbReference type="NCBI Taxonomy" id="212734"/>
    <lineage>
        <taxon>Eukaryota</taxon>
        <taxon>Viridiplantae</taxon>
        <taxon>Streptophyta</taxon>
        <taxon>Embryophyta</taxon>
        <taxon>Tracheophyta</taxon>
        <taxon>Spermatophyta</taxon>
        <taxon>Magnoliopsida</taxon>
        <taxon>Magnoliidae</taxon>
        <taxon>Laurales</taxon>
        <taxon>Calycanthaceae</taxon>
        <taxon>Calycanthus</taxon>
    </lineage>
</organism>
<sequence>MVKLRLKRCGRKQRAIYRIVAIDVRSRREGRDLRKVGFYDPINNQTYLNVPLILYFLEKGAQPTGTVYDILKKAEVFKELQINQKKSN</sequence>
<geneLocation type="chloroplast"/>
<comment type="subcellular location">
    <subcellularLocation>
        <location>Plastid</location>
        <location>Chloroplast</location>
    </subcellularLocation>
</comment>
<comment type="similarity">
    <text evidence="1">Belongs to the bacterial ribosomal protein bS16 family.</text>
</comment>
<accession>Q7YJY6</accession>
<name>RR16_CALFG</name>
<feature type="chain" id="PRO_0000167295" description="Small ribosomal subunit protein bS16c">
    <location>
        <begin position="1"/>
        <end position="88"/>
    </location>
</feature>
<gene>
    <name evidence="1" type="primary">rps16</name>
</gene>
<reference key="1">
    <citation type="journal article" date="2003" name="Plant Syst. Evol.">
        <title>The chloroplast genome of the 'basal' angiosperm Calycanthus fertilis -- structural and phylogenetic analyses.</title>
        <authorList>
            <person name="Goremykin V."/>
            <person name="Hirsch-Ernst K.I."/>
            <person name="Woelfl S."/>
            <person name="Hellwig F.H."/>
        </authorList>
    </citation>
    <scope>NUCLEOTIDE SEQUENCE [LARGE SCALE GENOMIC DNA]</scope>
</reference>